<comment type="function">
    <text evidence="1">This protein is involved in the repair of mismatches in DNA. It is possible that it carries out the mismatch recognition step. This protein has a weak ATPase activity.</text>
</comment>
<comment type="similarity">
    <text evidence="1">Belongs to the DNA mismatch repair MutS family.</text>
</comment>
<protein>
    <recommendedName>
        <fullName evidence="1">DNA mismatch repair protein MutS</fullName>
    </recommendedName>
</protein>
<feature type="chain" id="PRO_1000093645" description="DNA mismatch repair protein MutS">
    <location>
        <begin position="1"/>
        <end position="855"/>
    </location>
</feature>
<feature type="binding site" evidence="1">
    <location>
        <begin position="616"/>
        <end position="623"/>
    </location>
    <ligand>
        <name>ATP</name>
        <dbReference type="ChEBI" id="CHEBI:30616"/>
    </ligand>
</feature>
<evidence type="ECO:0000255" key="1">
    <source>
        <dbReference type="HAMAP-Rule" id="MF_00096"/>
    </source>
</evidence>
<accession>B4TTU0</accession>
<organism>
    <name type="scientific">Salmonella schwarzengrund (strain CVM19633)</name>
    <dbReference type="NCBI Taxonomy" id="439843"/>
    <lineage>
        <taxon>Bacteria</taxon>
        <taxon>Pseudomonadati</taxon>
        <taxon>Pseudomonadota</taxon>
        <taxon>Gammaproteobacteria</taxon>
        <taxon>Enterobacterales</taxon>
        <taxon>Enterobacteriaceae</taxon>
        <taxon>Salmonella</taxon>
    </lineage>
</organism>
<dbReference type="EMBL" id="CP001127">
    <property type="protein sequence ID" value="ACF92406.1"/>
    <property type="molecule type" value="Genomic_DNA"/>
</dbReference>
<dbReference type="RefSeq" id="WP_001005808.1">
    <property type="nucleotide sequence ID" value="NC_011094.1"/>
</dbReference>
<dbReference type="SMR" id="B4TTU0"/>
<dbReference type="KEGG" id="sew:SeSA_A3059"/>
<dbReference type="HOGENOM" id="CLU_002472_4_0_6"/>
<dbReference type="Proteomes" id="UP000001865">
    <property type="component" value="Chromosome"/>
</dbReference>
<dbReference type="GO" id="GO:0005829">
    <property type="term" value="C:cytosol"/>
    <property type="evidence" value="ECO:0007669"/>
    <property type="project" value="TreeGrafter"/>
</dbReference>
<dbReference type="GO" id="GO:0005524">
    <property type="term" value="F:ATP binding"/>
    <property type="evidence" value="ECO:0007669"/>
    <property type="project" value="UniProtKB-UniRule"/>
</dbReference>
<dbReference type="GO" id="GO:0140664">
    <property type="term" value="F:ATP-dependent DNA damage sensor activity"/>
    <property type="evidence" value="ECO:0007669"/>
    <property type="project" value="InterPro"/>
</dbReference>
<dbReference type="GO" id="GO:0003684">
    <property type="term" value="F:damaged DNA binding"/>
    <property type="evidence" value="ECO:0007669"/>
    <property type="project" value="UniProtKB-UniRule"/>
</dbReference>
<dbReference type="GO" id="GO:0030983">
    <property type="term" value="F:mismatched DNA binding"/>
    <property type="evidence" value="ECO:0007669"/>
    <property type="project" value="InterPro"/>
</dbReference>
<dbReference type="GO" id="GO:0006298">
    <property type="term" value="P:mismatch repair"/>
    <property type="evidence" value="ECO:0007669"/>
    <property type="project" value="UniProtKB-UniRule"/>
</dbReference>
<dbReference type="CDD" id="cd03284">
    <property type="entry name" value="ABC_MutS1"/>
    <property type="match status" value="1"/>
</dbReference>
<dbReference type="FunFam" id="1.10.1420.10:FF:000002">
    <property type="entry name" value="DNA mismatch repair protein MutS"/>
    <property type="match status" value="1"/>
</dbReference>
<dbReference type="FunFam" id="3.30.420.110:FF:000001">
    <property type="entry name" value="DNA mismatch repair protein MutS"/>
    <property type="match status" value="1"/>
</dbReference>
<dbReference type="FunFam" id="3.40.1170.10:FF:000001">
    <property type="entry name" value="DNA mismatch repair protein MutS"/>
    <property type="match status" value="1"/>
</dbReference>
<dbReference type="FunFam" id="3.40.50.300:FF:000283">
    <property type="entry name" value="DNA mismatch repair protein MutS"/>
    <property type="match status" value="1"/>
</dbReference>
<dbReference type="Gene3D" id="1.10.1420.10">
    <property type="match status" value="2"/>
</dbReference>
<dbReference type="Gene3D" id="6.10.140.430">
    <property type="match status" value="1"/>
</dbReference>
<dbReference type="Gene3D" id="3.40.1170.10">
    <property type="entry name" value="DNA repair protein MutS, domain I"/>
    <property type="match status" value="1"/>
</dbReference>
<dbReference type="Gene3D" id="3.30.420.110">
    <property type="entry name" value="MutS, connector domain"/>
    <property type="match status" value="1"/>
</dbReference>
<dbReference type="Gene3D" id="3.40.50.300">
    <property type="entry name" value="P-loop containing nucleotide triphosphate hydrolases"/>
    <property type="match status" value="1"/>
</dbReference>
<dbReference type="HAMAP" id="MF_00096">
    <property type="entry name" value="MutS"/>
    <property type="match status" value="1"/>
</dbReference>
<dbReference type="InterPro" id="IPR005748">
    <property type="entry name" value="DNA_mismatch_repair_MutS"/>
</dbReference>
<dbReference type="InterPro" id="IPR007695">
    <property type="entry name" value="DNA_mismatch_repair_MutS-lik_N"/>
</dbReference>
<dbReference type="InterPro" id="IPR017261">
    <property type="entry name" value="DNA_mismatch_repair_MutS/MSH"/>
</dbReference>
<dbReference type="InterPro" id="IPR000432">
    <property type="entry name" value="DNA_mismatch_repair_MutS_C"/>
</dbReference>
<dbReference type="InterPro" id="IPR007861">
    <property type="entry name" value="DNA_mismatch_repair_MutS_clamp"/>
</dbReference>
<dbReference type="InterPro" id="IPR007696">
    <property type="entry name" value="DNA_mismatch_repair_MutS_core"/>
</dbReference>
<dbReference type="InterPro" id="IPR016151">
    <property type="entry name" value="DNA_mismatch_repair_MutS_N"/>
</dbReference>
<dbReference type="InterPro" id="IPR036187">
    <property type="entry name" value="DNA_mismatch_repair_MutS_sf"/>
</dbReference>
<dbReference type="InterPro" id="IPR007860">
    <property type="entry name" value="DNA_mmatch_repair_MutS_con_dom"/>
</dbReference>
<dbReference type="InterPro" id="IPR045076">
    <property type="entry name" value="MutS"/>
</dbReference>
<dbReference type="InterPro" id="IPR036678">
    <property type="entry name" value="MutS_con_dom_sf"/>
</dbReference>
<dbReference type="InterPro" id="IPR027417">
    <property type="entry name" value="P-loop_NTPase"/>
</dbReference>
<dbReference type="NCBIfam" id="TIGR01070">
    <property type="entry name" value="mutS1"/>
    <property type="match status" value="1"/>
</dbReference>
<dbReference type="NCBIfam" id="NF003810">
    <property type="entry name" value="PRK05399.1"/>
    <property type="match status" value="1"/>
</dbReference>
<dbReference type="PANTHER" id="PTHR11361:SF34">
    <property type="entry name" value="DNA MISMATCH REPAIR PROTEIN MSH1, MITOCHONDRIAL"/>
    <property type="match status" value="1"/>
</dbReference>
<dbReference type="PANTHER" id="PTHR11361">
    <property type="entry name" value="DNA MISMATCH REPAIR PROTEIN MUTS FAMILY MEMBER"/>
    <property type="match status" value="1"/>
</dbReference>
<dbReference type="Pfam" id="PF01624">
    <property type="entry name" value="MutS_I"/>
    <property type="match status" value="1"/>
</dbReference>
<dbReference type="Pfam" id="PF05188">
    <property type="entry name" value="MutS_II"/>
    <property type="match status" value="1"/>
</dbReference>
<dbReference type="Pfam" id="PF05192">
    <property type="entry name" value="MutS_III"/>
    <property type="match status" value="1"/>
</dbReference>
<dbReference type="Pfam" id="PF05190">
    <property type="entry name" value="MutS_IV"/>
    <property type="match status" value="1"/>
</dbReference>
<dbReference type="Pfam" id="PF00488">
    <property type="entry name" value="MutS_V"/>
    <property type="match status" value="1"/>
</dbReference>
<dbReference type="PIRSF" id="PIRSF037677">
    <property type="entry name" value="DNA_mis_repair_Msh6"/>
    <property type="match status" value="1"/>
</dbReference>
<dbReference type="SMART" id="SM00534">
    <property type="entry name" value="MUTSac"/>
    <property type="match status" value="1"/>
</dbReference>
<dbReference type="SMART" id="SM00533">
    <property type="entry name" value="MUTSd"/>
    <property type="match status" value="1"/>
</dbReference>
<dbReference type="SUPFAM" id="SSF55271">
    <property type="entry name" value="DNA repair protein MutS, domain I"/>
    <property type="match status" value="1"/>
</dbReference>
<dbReference type="SUPFAM" id="SSF53150">
    <property type="entry name" value="DNA repair protein MutS, domain II"/>
    <property type="match status" value="1"/>
</dbReference>
<dbReference type="SUPFAM" id="SSF48334">
    <property type="entry name" value="DNA repair protein MutS, domain III"/>
    <property type="match status" value="1"/>
</dbReference>
<dbReference type="SUPFAM" id="SSF52540">
    <property type="entry name" value="P-loop containing nucleoside triphosphate hydrolases"/>
    <property type="match status" value="1"/>
</dbReference>
<dbReference type="PROSITE" id="PS00486">
    <property type="entry name" value="DNA_MISMATCH_REPAIR_2"/>
    <property type="match status" value="1"/>
</dbReference>
<sequence length="855" mass="95423">MNESFDKDFSNHTPMMQQYLKLKAQHPEILLFYRMGDFYELFYDDAKRASQLLDISLTKRGASAGEPIPMAGIPHHAVENYLAKLVNQGESVAICEQIGDPATSKGPVERKVVRIVTPGTISDEALLQERQDNLLAAIWQDGKGYGYATLDISSGRFRLSEPADRETMAAELQRTNPAELLYAEDFAEMALIEGRRGLRRRPLWEFEIDTARQQLNLQFGTRDLVGFGVENASRGLCAAGCLLQYVKDTQRTSLPHIRSITMERQQDSIIMDAATRRNLEITQNLAGGVENTLAAVLDCTVTPMGSRMLKRWLHMPVRNTDILRERQQTIGALQDTVSELQPVLRQVGDLERILARLALRTARPRDLARMRHAFQQLPELHAQLETVDSAPVQALRKKMGDFAELRDLLERAIIDAPPVLVRDGGVIAPGYHEELDEWRALADGATDYLDRLEIRERERTGLDTLKVGYNAVHGYYIQISRGQSHLAPINYVRRQTLKNAERYIIPELKEYEDKVLTSKGKALALEKQLYDELFDLLLPHLADLQQSANALAELDVLVNLSERAWTLNYTCPTFTDKPGIRITEGRHPVVEQVLNEPFIANPLNLSPQRRMLIITGPNMGGKSTYMRQTALIALLAYIGSYVPAQNVEIGPIDRIFTRVGAADDLASGRSTFMVEMTETANILHNATENSLVLMDEIGRGTSTYDGLSLAWACAENLANKIKALTLFATHYFELTQLPEKMEGVANVHLDALEHGDTIAFMHSVQDGAASKSYGLAVAALAGVPKEVIKRARQKLRELESISPNAAATQVDGTQMSLLAAPEETSPAVEALENLDPDSLTPRQALEWIYRLKSLV</sequence>
<proteinExistence type="inferred from homology"/>
<keyword id="KW-0067">ATP-binding</keyword>
<keyword id="KW-0227">DNA damage</keyword>
<keyword id="KW-0234">DNA repair</keyword>
<keyword id="KW-0238">DNA-binding</keyword>
<keyword id="KW-0547">Nucleotide-binding</keyword>
<reference key="1">
    <citation type="journal article" date="2011" name="J. Bacteriol.">
        <title>Comparative genomics of 28 Salmonella enterica isolates: evidence for CRISPR-mediated adaptive sublineage evolution.</title>
        <authorList>
            <person name="Fricke W.F."/>
            <person name="Mammel M.K."/>
            <person name="McDermott P.F."/>
            <person name="Tartera C."/>
            <person name="White D.G."/>
            <person name="Leclerc J.E."/>
            <person name="Ravel J."/>
            <person name="Cebula T.A."/>
        </authorList>
    </citation>
    <scope>NUCLEOTIDE SEQUENCE [LARGE SCALE GENOMIC DNA]</scope>
    <source>
        <strain>CVM19633</strain>
    </source>
</reference>
<name>MUTS_SALSV</name>
<gene>
    <name evidence="1" type="primary">mutS</name>
    <name type="ordered locus">SeSA_A3059</name>
</gene>